<evidence type="ECO:0000255" key="1">
    <source>
        <dbReference type="HAMAP-Rule" id="MF_00008"/>
    </source>
</evidence>
<evidence type="ECO:0000269" key="2">
    <source>
    </source>
</evidence>
<proteinExistence type="inferred from homology"/>
<accession>Q9UWQ5</accession>
<comment type="function">
    <text evidence="1 2">Catalyzes the reductive methylation of 2'-deoxyuridine-5'-monophosphate (dUMP) to 2'-deoxythymidine-5'-monophosphate (dTMP) while utilizing 5,10-methylenetetrahydrofolate (mTHF) as the methyl donor and reductant in the reaction, yielding dihydrofolate (DHF) as a by-product. This enzymatic reaction provides an intracellular de novo source of dTMP, an essential precursor for DNA biosynthesis.</text>
</comment>
<comment type="catalytic activity">
    <reaction evidence="1">
        <text>dUMP + (6R)-5,10-methylene-5,6,7,8-tetrahydrofolate = 7,8-dihydrofolate + dTMP</text>
        <dbReference type="Rhea" id="RHEA:12104"/>
        <dbReference type="ChEBI" id="CHEBI:15636"/>
        <dbReference type="ChEBI" id="CHEBI:57451"/>
        <dbReference type="ChEBI" id="CHEBI:63528"/>
        <dbReference type="ChEBI" id="CHEBI:246422"/>
        <dbReference type="EC" id="2.1.1.45"/>
    </reaction>
</comment>
<comment type="pathway">
    <text evidence="1">Pyrimidine metabolism; dTTP biosynthesis.</text>
</comment>
<comment type="subunit">
    <text evidence="1">Homodimer.</text>
</comment>
<comment type="subcellular location">
    <subcellularLocation>
        <location evidence="1">Cytoplasm</location>
    </subcellularLocation>
</comment>
<comment type="disruption phenotype">
    <text evidence="2">Thymidine auxotrophy.</text>
</comment>
<comment type="similarity">
    <text evidence="1">Belongs to the thymidylate synthase family. Bacterial-type ThyA subfamily.</text>
</comment>
<protein>
    <recommendedName>
        <fullName evidence="1">Thymidylate synthase</fullName>
        <shortName evidence="1">TS</shortName>
        <shortName evidence="1">TSase</shortName>
        <ecNumber evidence="1">2.1.1.45</ecNumber>
    </recommendedName>
</protein>
<organism>
    <name type="scientific">Haloferax volcanii</name>
    <name type="common">Halobacterium volcanii</name>
    <dbReference type="NCBI Taxonomy" id="2246"/>
    <lineage>
        <taxon>Archaea</taxon>
        <taxon>Methanobacteriati</taxon>
        <taxon>Methanobacteriota</taxon>
        <taxon>Stenosarchaea group</taxon>
        <taxon>Halobacteria</taxon>
        <taxon>Halobacteriales</taxon>
        <taxon>Haloferacaceae</taxon>
        <taxon>Haloferax</taxon>
    </lineage>
</organism>
<reference key="1">
    <citation type="journal article" date="2000" name="Mol. Microbiol.">
        <title>The extremely halophilic archaeon Haloferax volcanii has two very different dihydrofolate reductases.</title>
        <authorList>
            <person name="Ortenberg R."/>
            <person name="Rozenblatt-Rosen O."/>
            <person name="Mevarech M."/>
        </authorList>
    </citation>
    <scope>NUCLEOTIDE SEQUENCE [GENOMIC DNA]</scope>
    <scope>FUNCTION</scope>
    <scope>DISRUPTION PHENOTYPE</scope>
    <source>
        <strain>WR341</strain>
    </source>
</reference>
<dbReference type="EC" id="2.1.1.45" evidence="1"/>
<dbReference type="EMBL" id="AF124982">
    <property type="protein sequence ID" value="AAF23264.1"/>
    <property type="molecule type" value="Genomic_DNA"/>
</dbReference>
<dbReference type="SMR" id="Q9UWQ5"/>
<dbReference type="UniPathway" id="UPA00575"/>
<dbReference type="GO" id="GO:0005829">
    <property type="term" value="C:cytosol"/>
    <property type="evidence" value="ECO:0007669"/>
    <property type="project" value="TreeGrafter"/>
</dbReference>
<dbReference type="GO" id="GO:0004799">
    <property type="term" value="F:thymidylate synthase activity"/>
    <property type="evidence" value="ECO:0007669"/>
    <property type="project" value="UniProtKB-UniRule"/>
</dbReference>
<dbReference type="GO" id="GO:0006231">
    <property type="term" value="P:dTMP biosynthetic process"/>
    <property type="evidence" value="ECO:0007669"/>
    <property type="project" value="UniProtKB-UniRule"/>
</dbReference>
<dbReference type="GO" id="GO:0006235">
    <property type="term" value="P:dTTP biosynthetic process"/>
    <property type="evidence" value="ECO:0007669"/>
    <property type="project" value="UniProtKB-UniRule"/>
</dbReference>
<dbReference type="GO" id="GO:0032259">
    <property type="term" value="P:methylation"/>
    <property type="evidence" value="ECO:0007669"/>
    <property type="project" value="UniProtKB-KW"/>
</dbReference>
<dbReference type="CDD" id="cd00351">
    <property type="entry name" value="TS_Pyrimidine_HMase"/>
    <property type="match status" value="1"/>
</dbReference>
<dbReference type="Gene3D" id="3.30.572.10">
    <property type="entry name" value="Thymidylate synthase/dCMP hydroxymethylase domain"/>
    <property type="match status" value="1"/>
</dbReference>
<dbReference type="HAMAP" id="MF_00008">
    <property type="entry name" value="Thymidy_synth_bact"/>
    <property type="match status" value="1"/>
</dbReference>
<dbReference type="InterPro" id="IPR045097">
    <property type="entry name" value="Thymidate_synth/dCMP_Mease"/>
</dbReference>
<dbReference type="InterPro" id="IPR023451">
    <property type="entry name" value="Thymidate_synth/dCMP_Mease_dom"/>
</dbReference>
<dbReference type="InterPro" id="IPR036926">
    <property type="entry name" value="Thymidate_synth/dCMP_Mease_sf"/>
</dbReference>
<dbReference type="InterPro" id="IPR000398">
    <property type="entry name" value="Thymidylate_synthase"/>
</dbReference>
<dbReference type="NCBIfam" id="TIGR03284">
    <property type="entry name" value="thym_sym"/>
    <property type="match status" value="1"/>
</dbReference>
<dbReference type="PANTHER" id="PTHR11548">
    <property type="entry name" value="THYMIDYLATE SYNTHASE 1"/>
    <property type="match status" value="1"/>
</dbReference>
<dbReference type="PANTHER" id="PTHR11548:SF1">
    <property type="entry name" value="THYMIDYLATE SYNTHASE 1"/>
    <property type="match status" value="1"/>
</dbReference>
<dbReference type="Pfam" id="PF00303">
    <property type="entry name" value="Thymidylat_synt"/>
    <property type="match status" value="1"/>
</dbReference>
<dbReference type="PRINTS" id="PR00108">
    <property type="entry name" value="THYMDSNTHASE"/>
</dbReference>
<dbReference type="SUPFAM" id="SSF55831">
    <property type="entry name" value="Thymidylate synthase/dCMP hydroxymethylase"/>
    <property type="match status" value="1"/>
</dbReference>
<gene>
    <name evidence="1" type="primary">thyA</name>
    <name type="synonym">hts</name>
</gene>
<sequence>MTTTPNQGTSHAPIFDLVTDVFGTGRHKPNRTGVDTISGFSKHYTVDLQEGFPLLTTKDLSGFRWNSLIHELLWYFSGEEHIRTLREETGIWDAWADEEGHLDTAYGRFWRRYPVPEEGLAGEAWPDDGHRWMNDEGTFDQLAYVLDTLDENPNSRRLVINAWHPANAAVSTLPPCHYTFVFNVQGDELNLHLTQRSGDIALGVPFNLAAYAILAQVVAQRAGFELGSFAHTIVDAHVYCGAGERGAWYGDHLDELQSRLADVQSPDEYLDVREWLLDAAPEEADGEEDYDHVPGLLLQASREPRERPALDVADVPLEDLSFEDIVLRDYDPADGIRFAVAE</sequence>
<keyword id="KW-0963">Cytoplasm</keyword>
<keyword id="KW-0489">Methyltransferase</keyword>
<keyword id="KW-0545">Nucleotide biosynthesis</keyword>
<keyword id="KW-0808">Transferase</keyword>
<name>TYSY_HALVO</name>
<feature type="chain" id="PRO_0000428868" description="Thymidylate synthase">
    <location>
        <begin position="1"/>
        <end position="342"/>
    </location>
</feature>
<feature type="active site" description="Nucleophile" evidence="1">
    <location>
        <position position="176"/>
    </location>
</feature>
<feature type="binding site" description="in other chain" evidence="1">
    <location>
        <position position="31"/>
    </location>
    <ligand>
        <name>dUMP</name>
        <dbReference type="ChEBI" id="CHEBI:246422"/>
        <note>ligand shared between dimeric partners</note>
    </ligand>
</feature>
<feature type="binding site" evidence="1">
    <location>
        <begin position="156"/>
        <end position="157"/>
    </location>
    <ligand>
        <name>dUMP</name>
        <dbReference type="ChEBI" id="CHEBI:246422"/>
        <note>ligand shared between dimeric partners</note>
    </ligand>
</feature>
<feature type="binding site" description="in other chain" evidence="1">
    <location>
        <begin position="196"/>
        <end position="199"/>
    </location>
    <ligand>
        <name>dUMP</name>
        <dbReference type="ChEBI" id="CHEBI:246422"/>
        <note>ligand shared between dimeric partners</note>
    </ligand>
</feature>
<feature type="binding site" evidence="1">
    <location>
        <position position="199"/>
    </location>
    <ligand>
        <name>(6R)-5,10-methylene-5,6,7,8-tetrahydrofolate</name>
        <dbReference type="ChEBI" id="CHEBI:15636"/>
    </ligand>
</feature>
<feature type="binding site" description="in other chain" evidence="1">
    <location>
        <position position="207"/>
    </location>
    <ligand>
        <name>dUMP</name>
        <dbReference type="ChEBI" id="CHEBI:246422"/>
        <note>ligand shared between dimeric partners</note>
    </ligand>
</feature>
<feature type="binding site" description="in other chain" evidence="1">
    <location>
        <begin position="237"/>
        <end position="239"/>
    </location>
    <ligand>
        <name>dUMP</name>
        <dbReference type="ChEBI" id="CHEBI:246422"/>
        <note>ligand shared between dimeric partners</note>
    </ligand>
</feature>
<feature type="binding site" evidence="1">
    <location>
        <position position="341"/>
    </location>
    <ligand>
        <name>(6R)-5,10-methylene-5,6,7,8-tetrahydrofolate</name>
        <dbReference type="ChEBI" id="CHEBI:15636"/>
    </ligand>
</feature>